<keyword id="KW-0963">Cytoplasm</keyword>
<keyword id="KW-0238">DNA-binding</keyword>
<keyword id="KW-1185">Reference proteome</keyword>
<keyword id="KW-0678">Repressor</keyword>
<keyword id="KW-0804">Transcription</keyword>
<keyword id="KW-0805">Transcription regulation</keyword>
<evidence type="ECO:0000250" key="1">
    <source>
        <dbReference type="UniProtKB" id="P9WMD3"/>
    </source>
</evidence>
<evidence type="ECO:0000255" key="2">
    <source>
        <dbReference type="PROSITE-ProRule" id="PRU00335"/>
    </source>
</evidence>
<evidence type="ECO:0000256" key="3">
    <source>
        <dbReference type="SAM" id="MobiDB-lite"/>
    </source>
</evidence>
<gene>
    <name type="ordered locus">MT1396</name>
</gene>
<protein>
    <recommendedName>
        <fullName evidence="1">HTH-type transcriptional repressor MT1396</fullName>
    </recommendedName>
</protein>
<sequence length="261" mass="28253">MQTTPGKRQRRQRGSINPEDIISGAFELAQQVSIDNLSMPLLGKHLGVGVTSIYWYFRKKDDLLNAMTDRALSKYVFATPYIEAGDWRETLRNHARSMRKTFADNPVLCDLILIRAALSPKTARLGAQEMEKAIANLVTAGLSLEDAFDIYSAVSVHVRGSVVLDRLSRKSQSAGSGPSAIEHPVAIDPATTPLLAHATGRGHRIGAPDETNFEYGLECILDHAGRLIEQSSKAAGEVAVRRPTATADAPTPGARAKAVAR</sequence>
<name>CHLER_MYCTO</name>
<proteinExistence type="inferred from homology"/>
<dbReference type="EMBL" id="AE000516">
    <property type="protein sequence ID" value="AAK45659.1"/>
    <property type="molecule type" value="Genomic_DNA"/>
</dbReference>
<dbReference type="PIR" id="H70740">
    <property type="entry name" value="H70740"/>
</dbReference>
<dbReference type="RefSeq" id="WP_003898836.1">
    <property type="nucleotide sequence ID" value="NZ_KK341227.1"/>
</dbReference>
<dbReference type="SMR" id="P9WMD2"/>
<dbReference type="KEGG" id="mtc:MT1396"/>
<dbReference type="PATRIC" id="fig|83331.31.peg.1503"/>
<dbReference type="HOGENOM" id="CLU_069543_1_0_11"/>
<dbReference type="Proteomes" id="UP000001020">
    <property type="component" value="Chromosome"/>
</dbReference>
<dbReference type="GO" id="GO:0005737">
    <property type="term" value="C:cytoplasm"/>
    <property type="evidence" value="ECO:0007669"/>
    <property type="project" value="UniProtKB-SubCell"/>
</dbReference>
<dbReference type="GO" id="GO:0003700">
    <property type="term" value="F:DNA-binding transcription factor activity"/>
    <property type="evidence" value="ECO:0007669"/>
    <property type="project" value="TreeGrafter"/>
</dbReference>
<dbReference type="GO" id="GO:0000976">
    <property type="term" value="F:transcription cis-regulatory region binding"/>
    <property type="evidence" value="ECO:0007669"/>
    <property type="project" value="TreeGrafter"/>
</dbReference>
<dbReference type="GO" id="GO:0045892">
    <property type="term" value="P:negative regulation of DNA-templated transcription"/>
    <property type="evidence" value="ECO:0007669"/>
    <property type="project" value="InterPro"/>
</dbReference>
<dbReference type="Gene3D" id="1.10.10.60">
    <property type="entry name" value="Homeodomain-like"/>
    <property type="match status" value="1"/>
</dbReference>
<dbReference type="Gene3D" id="1.10.357.10">
    <property type="entry name" value="Tetracycline Repressor, domain 2"/>
    <property type="match status" value="1"/>
</dbReference>
<dbReference type="InterPro" id="IPR023772">
    <property type="entry name" value="DNA-bd_HTH_TetR-type_CS"/>
</dbReference>
<dbReference type="InterPro" id="IPR009057">
    <property type="entry name" value="Homeodomain-like_sf"/>
</dbReference>
<dbReference type="InterPro" id="IPR050109">
    <property type="entry name" value="HTH-type_TetR-like_transc_reg"/>
</dbReference>
<dbReference type="InterPro" id="IPR001647">
    <property type="entry name" value="HTH_TetR"/>
</dbReference>
<dbReference type="InterPro" id="IPR004111">
    <property type="entry name" value="Repressor_TetR_C"/>
</dbReference>
<dbReference type="InterPro" id="IPR036271">
    <property type="entry name" value="Tet_transcr_reg_TetR-rel_C_sf"/>
</dbReference>
<dbReference type="PANTHER" id="PTHR30055">
    <property type="entry name" value="HTH-TYPE TRANSCRIPTIONAL REGULATOR RUTR"/>
    <property type="match status" value="1"/>
</dbReference>
<dbReference type="PANTHER" id="PTHR30055:SF207">
    <property type="entry name" value="HTH-TYPE TRANSCRIPTIONAL REPRESSOR FATR"/>
    <property type="match status" value="1"/>
</dbReference>
<dbReference type="Pfam" id="PF02909">
    <property type="entry name" value="TetR_C_1"/>
    <property type="match status" value="1"/>
</dbReference>
<dbReference type="Pfam" id="PF00440">
    <property type="entry name" value="TetR_N"/>
    <property type="match status" value="1"/>
</dbReference>
<dbReference type="SUPFAM" id="SSF46689">
    <property type="entry name" value="Homeodomain-like"/>
    <property type="match status" value="1"/>
</dbReference>
<dbReference type="SUPFAM" id="SSF48498">
    <property type="entry name" value="Tetracyclin repressor-like, C-terminal domain"/>
    <property type="match status" value="1"/>
</dbReference>
<dbReference type="PROSITE" id="PS01081">
    <property type="entry name" value="HTH_TETR_1"/>
    <property type="match status" value="1"/>
</dbReference>
<dbReference type="PROSITE" id="PS50977">
    <property type="entry name" value="HTH_TETR_2"/>
    <property type="match status" value="1"/>
</dbReference>
<organism>
    <name type="scientific">Mycobacterium tuberculosis (strain CDC 1551 / Oshkosh)</name>
    <dbReference type="NCBI Taxonomy" id="83331"/>
    <lineage>
        <taxon>Bacteria</taxon>
        <taxon>Bacillati</taxon>
        <taxon>Actinomycetota</taxon>
        <taxon>Actinomycetes</taxon>
        <taxon>Mycobacteriales</taxon>
        <taxon>Mycobacteriaceae</taxon>
        <taxon>Mycobacterium</taxon>
        <taxon>Mycobacterium tuberculosis complex</taxon>
    </lineage>
</organism>
<reference key="1">
    <citation type="journal article" date="2002" name="J. Bacteriol.">
        <title>Whole-genome comparison of Mycobacterium tuberculosis clinical and laboratory strains.</title>
        <authorList>
            <person name="Fleischmann R.D."/>
            <person name="Alland D."/>
            <person name="Eisen J.A."/>
            <person name="Carpenter L."/>
            <person name="White O."/>
            <person name="Peterson J.D."/>
            <person name="DeBoy R.T."/>
            <person name="Dodson R.J."/>
            <person name="Gwinn M.L."/>
            <person name="Haft D.H."/>
            <person name="Hickey E.K."/>
            <person name="Kolonay J.F."/>
            <person name="Nelson W.C."/>
            <person name="Umayam L.A."/>
            <person name="Ermolaeva M.D."/>
            <person name="Salzberg S.L."/>
            <person name="Delcher A."/>
            <person name="Utterback T.R."/>
            <person name="Weidman J.F."/>
            <person name="Khouri H.M."/>
            <person name="Gill J."/>
            <person name="Mikula A."/>
            <person name="Bishai W."/>
            <person name="Jacobs W.R. Jr."/>
            <person name="Venter J.C."/>
            <person name="Fraser C.M."/>
        </authorList>
    </citation>
    <scope>NUCLEOTIDE SEQUENCE [LARGE SCALE GENOMIC DNA]</scope>
    <source>
        <strain>CDC 1551 / Oshkosh</strain>
    </source>
</reference>
<feature type="chain" id="PRO_0000427324" description="HTH-type transcriptional repressor MT1396">
    <location>
        <begin position="1"/>
        <end position="261"/>
    </location>
</feature>
<feature type="domain" description="HTH tetR-type" evidence="2">
    <location>
        <begin position="15"/>
        <end position="75"/>
    </location>
</feature>
<feature type="DNA-binding region" description="H-T-H motif" evidence="2">
    <location>
        <begin position="38"/>
        <end position="57"/>
    </location>
</feature>
<feature type="region of interest" description="Disordered" evidence="3">
    <location>
        <begin position="234"/>
        <end position="261"/>
    </location>
</feature>
<feature type="compositionally biased region" description="Low complexity" evidence="3">
    <location>
        <begin position="241"/>
        <end position="261"/>
    </location>
</feature>
<comment type="function">
    <text evidence="1">Negatively regulates the expression of the efflux pump MT0201 upon chloramphenicol exposure. Acts by binding to the MT0201 promoter region.</text>
</comment>
<comment type="subcellular location">
    <subcellularLocation>
        <location evidence="1">Cytoplasm</location>
    </subcellularLocation>
</comment>
<accession>P9WMD2</accession>
<accession>L0T6E2</accession>
<accession>P67434</accession>
<accession>Q11023</accession>